<organism>
    <name type="scientific">Afipia carboxidovorans (strain ATCC 49405 / DSM 1227 / KCTC 32145 / OM5)</name>
    <name type="common">Oligotropha carboxidovorans</name>
    <dbReference type="NCBI Taxonomy" id="504832"/>
    <lineage>
        <taxon>Bacteria</taxon>
        <taxon>Pseudomonadati</taxon>
        <taxon>Pseudomonadota</taxon>
        <taxon>Alphaproteobacteria</taxon>
        <taxon>Hyphomicrobiales</taxon>
        <taxon>Nitrobacteraceae</taxon>
        <taxon>Afipia</taxon>
    </lineage>
</organism>
<gene>
    <name evidence="1" type="primary">rpsP</name>
    <name type="ordered locus">OCAR_4268</name>
    <name type="ordered locus">OCA5_c02510</name>
</gene>
<name>RS16_AFIC5</name>
<sequence>MSVVIRLARAGTKKRPVYHVVVADSRFPRDGRFIERLGYFNPLLPKDNEARLKLDMDKVKAWLAKGAQPSDRVMRFLDAAGVAKRAPRNNPEKAVPRKERKAAAEAAAKA</sequence>
<keyword id="KW-1185">Reference proteome</keyword>
<keyword id="KW-0687">Ribonucleoprotein</keyword>
<keyword id="KW-0689">Ribosomal protein</keyword>
<protein>
    <recommendedName>
        <fullName evidence="1">Small ribosomal subunit protein bS16</fullName>
    </recommendedName>
    <alternativeName>
        <fullName evidence="3">30S ribosomal protein S16</fullName>
    </alternativeName>
</protein>
<evidence type="ECO:0000255" key="1">
    <source>
        <dbReference type="HAMAP-Rule" id="MF_00385"/>
    </source>
</evidence>
<evidence type="ECO:0000256" key="2">
    <source>
        <dbReference type="SAM" id="MobiDB-lite"/>
    </source>
</evidence>
<evidence type="ECO:0000305" key="3"/>
<accession>B6JAQ4</accession>
<accession>F8BTD5</accession>
<reference key="1">
    <citation type="journal article" date="2008" name="J. Bacteriol.">
        <title>Genome sequence of the chemolithoautotrophic bacterium Oligotropha carboxidovorans OM5T.</title>
        <authorList>
            <person name="Paul D."/>
            <person name="Bridges S."/>
            <person name="Burgess S.C."/>
            <person name="Dandass Y."/>
            <person name="Lawrence M.L."/>
        </authorList>
    </citation>
    <scope>NUCLEOTIDE SEQUENCE [LARGE SCALE GENOMIC DNA]</scope>
    <source>
        <strain>ATCC 49405 / DSM 1227 / KCTC 32145 / OM5</strain>
    </source>
</reference>
<reference key="2">
    <citation type="journal article" date="2011" name="J. Bacteriol.">
        <title>Complete genome sequences of the chemolithoautotrophic Oligotropha carboxidovorans strains OM4 and OM5.</title>
        <authorList>
            <person name="Volland S."/>
            <person name="Rachinger M."/>
            <person name="Strittmatter A."/>
            <person name="Daniel R."/>
            <person name="Gottschalk G."/>
            <person name="Meyer O."/>
        </authorList>
    </citation>
    <scope>NUCLEOTIDE SEQUENCE [LARGE SCALE GENOMIC DNA]</scope>
    <source>
        <strain>ATCC 49405 / DSM 1227 / KCTC 32145 / OM5</strain>
    </source>
</reference>
<feature type="chain" id="PRO_1000196447" description="Small ribosomal subunit protein bS16">
    <location>
        <begin position="1"/>
        <end position="110"/>
    </location>
</feature>
<feature type="region of interest" description="Disordered" evidence="2">
    <location>
        <begin position="84"/>
        <end position="110"/>
    </location>
</feature>
<feature type="compositionally biased region" description="Basic and acidic residues" evidence="2">
    <location>
        <begin position="90"/>
        <end position="103"/>
    </location>
</feature>
<dbReference type="EMBL" id="CP001196">
    <property type="protein sequence ID" value="ACI91417.1"/>
    <property type="molecule type" value="Genomic_DNA"/>
</dbReference>
<dbReference type="EMBL" id="CP002826">
    <property type="protein sequence ID" value="AEI04980.1"/>
    <property type="molecule type" value="Genomic_DNA"/>
</dbReference>
<dbReference type="RefSeq" id="WP_012561448.1">
    <property type="nucleotide sequence ID" value="NC_015684.1"/>
</dbReference>
<dbReference type="SMR" id="B6JAQ4"/>
<dbReference type="STRING" id="504832.OCA5_c02510"/>
<dbReference type="KEGG" id="oca:OCAR_4268"/>
<dbReference type="KEGG" id="ocg:OCA5_c02510"/>
<dbReference type="PATRIC" id="fig|504832.7.peg.266"/>
<dbReference type="eggNOG" id="COG0228">
    <property type="taxonomic scope" value="Bacteria"/>
</dbReference>
<dbReference type="HOGENOM" id="CLU_100590_3_1_5"/>
<dbReference type="OrthoDB" id="9807878at2"/>
<dbReference type="Proteomes" id="UP000007730">
    <property type="component" value="Chromosome"/>
</dbReference>
<dbReference type="GO" id="GO:0005737">
    <property type="term" value="C:cytoplasm"/>
    <property type="evidence" value="ECO:0007669"/>
    <property type="project" value="UniProtKB-ARBA"/>
</dbReference>
<dbReference type="GO" id="GO:0015935">
    <property type="term" value="C:small ribosomal subunit"/>
    <property type="evidence" value="ECO:0007669"/>
    <property type="project" value="TreeGrafter"/>
</dbReference>
<dbReference type="GO" id="GO:0003735">
    <property type="term" value="F:structural constituent of ribosome"/>
    <property type="evidence" value="ECO:0007669"/>
    <property type="project" value="InterPro"/>
</dbReference>
<dbReference type="GO" id="GO:0006412">
    <property type="term" value="P:translation"/>
    <property type="evidence" value="ECO:0007669"/>
    <property type="project" value="UniProtKB-UniRule"/>
</dbReference>
<dbReference type="FunFam" id="3.30.1320.10:FF:000008">
    <property type="entry name" value="30S ribosomal protein S16"/>
    <property type="match status" value="1"/>
</dbReference>
<dbReference type="Gene3D" id="3.30.1320.10">
    <property type="match status" value="1"/>
</dbReference>
<dbReference type="HAMAP" id="MF_00385">
    <property type="entry name" value="Ribosomal_bS16"/>
    <property type="match status" value="1"/>
</dbReference>
<dbReference type="InterPro" id="IPR000307">
    <property type="entry name" value="Ribosomal_bS16"/>
</dbReference>
<dbReference type="InterPro" id="IPR023803">
    <property type="entry name" value="Ribosomal_bS16_dom_sf"/>
</dbReference>
<dbReference type="NCBIfam" id="TIGR00002">
    <property type="entry name" value="S16"/>
    <property type="match status" value="1"/>
</dbReference>
<dbReference type="PANTHER" id="PTHR12919">
    <property type="entry name" value="30S RIBOSOMAL PROTEIN S16"/>
    <property type="match status" value="1"/>
</dbReference>
<dbReference type="PANTHER" id="PTHR12919:SF20">
    <property type="entry name" value="SMALL RIBOSOMAL SUBUNIT PROTEIN BS16M"/>
    <property type="match status" value="1"/>
</dbReference>
<dbReference type="Pfam" id="PF00886">
    <property type="entry name" value="Ribosomal_S16"/>
    <property type="match status" value="1"/>
</dbReference>
<dbReference type="SUPFAM" id="SSF54565">
    <property type="entry name" value="Ribosomal protein S16"/>
    <property type="match status" value="1"/>
</dbReference>
<proteinExistence type="inferred from homology"/>
<comment type="similarity">
    <text evidence="1">Belongs to the bacterial ribosomal protein bS16 family.</text>
</comment>